<feature type="chain" id="PRO_0000087080" description="Ethanolamine ammonia-lyase reactivase EutA">
    <location>
        <begin position="1"/>
        <end position="467"/>
    </location>
</feature>
<dbReference type="EMBL" id="AF093749">
    <property type="protein sequence ID" value="AAC78122.1"/>
    <property type="molecule type" value="Genomic_DNA"/>
</dbReference>
<dbReference type="EMBL" id="AE006468">
    <property type="protein sequence ID" value="AAL21353.1"/>
    <property type="molecule type" value="Genomic_DNA"/>
</dbReference>
<dbReference type="RefSeq" id="NP_461394.1">
    <property type="nucleotide sequence ID" value="NC_003197.2"/>
</dbReference>
<dbReference type="RefSeq" id="WP_001097535.1">
    <property type="nucleotide sequence ID" value="NC_003197.2"/>
</dbReference>
<dbReference type="STRING" id="99287.STM2459"/>
<dbReference type="PaxDb" id="99287-STM2459"/>
<dbReference type="GeneID" id="1253981"/>
<dbReference type="KEGG" id="stm:STM2459"/>
<dbReference type="PATRIC" id="fig|99287.12.peg.2597"/>
<dbReference type="HOGENOM" id="CLU_046255_0_0_6"/>
<dbReference type="OMA" id="DTACFDI"/>
<dbReference type="PhylomeDB" id="Q9ZFV2"/>
<dbReference type="BioCyc" id="SENT99287:STM2459-MONOMER"/>
<dbReference type="UniPathway" id="UPA00560"/>
<dbReference type="Proteomes" id="UP000001014">
    <property type="component" value="Chromosome"/>
</dbReference>
<dbReference type="GO" id="GO:0031469">
    <property type="term" value="C:bacterial microcompartment"/>
    <property type="evidence" value="ECO:0007669"/>
    <property type="project" value="UniProtKB-SubCell"/>
</dbReference>
<dbReference type="GO" id="GO:0046336">
    <property type="term" value="P:ethanolamine catabolic process"/>
    <property type="evidence" value="ECO:0007669"/>
    <property type="project" value="UniProtKB-UniPathway"/>
</dbReference>
<dbReference type="GO" id="GO:0006091">
    <property type="term" value="P:generation of precursor metabolites and energy"/>
    <property type="evidence" value="ECO:0000315"/>
    <property type="project" value="UniProtKB"/>
</dbReference>
<dbReference type="InterPro" id="IPR043129">
    <property type="entry name" value="ATPase_NBD"/>
</dbReference>
<dbReference type="InterPro" id="IPR009377">
    <property type="entry name" value="EutA"/>
</dbReference>
<dbReference type="InterPro" id="IPR050696">
    <property type="entry name" value="FtsA/MreB"/>
</dbReference>
<dbReference type="NCBIfam" id="NF007991">
    <property type="entry name" value="PRK10719.1-1"/>
    <property type="match status" value="1"/>
</dbReference>
<dbReference type="NCBIfam" id="NF007993">
    <property type="entry name" value="PRK10719.1-4"/>
    <property type="match status" value="1"/>
</dbReference>
<dbReference type="PANTHER" id="PTHR32432">
    <property type="entry name" value="CELL DIVISION PROTEIN FTSA-RELATED"/>
    <property type="match status" value="1"/>
</dbReference>
<dbReference type="PANTHER" id="PTHR32432:SF13">
    <property type="entry name" value="ETHANOLAMINE AMMONIA-LYASE REACTIVASE EUTA"/>
    <property type="match status" value="1"/>
</dbReference>
<dbReference type="Pfam" id="PF06277">
    <property type="entry name" value="EutA"/>
    <property type="match status" value="1"/>
</dbReference>
<dbReference type="PIRSF" id="PIRSF012293">
    <property type="entry name" value="EutA"/>
    <property type="match status" value="1"/>
</dbReference>
<dbReference type="SUPFAM" id="SSF53067">
    <property type="entry name" value="Actin-like ATPase domain"/>
    <property type="match status" value="1"/>
</dbReference>
<comment type="function">
    <text evidence="1 3 10 11">Reactivates suicidally inhibited ethanolamine ammonia-lyase (EAL), cyanocobalamin-inactivated EAL and O(2)-inactivated EAL; requires Mg(2+), ATP and adenosylcobalamin. Reactivation probably occurs by the ATP-dependent exchange of cobalamin (By similarity). Protects EAL from inhibition by CN-B12, does not have adenosylation activity (Probable) (PubMed:15516577).</text>
</comment>
<comment type="function">
    <text evidence="6 7">Expression of the eut operon allows this bacteria to use ethanolamine as a carbon, nitrogen and energy source. It relies on cobalamin (vitamin B12) both as a cofactor for the ethanolamine ammonia-lyase (EAL) activity and to induce the operon (PubMed:3045078). EA enhances bacterial survival in macrophages in a concentration-dependent manner, suggesting it is an important nutrient during infection (PubMed:29531136).</text>
</comment>
<comment type="pathway">
    <text evidence="7">Amine and polyamine degradation; ethanolamine degradation.</text>
</comment>
<comment type="subcellular location">
    <subcellularLocation>
        <location evidence="9">Bacterial microcompartment</location>
    </subcellularLocation>
</comment>
<comment type="induction">
    <text evidence="7">Part of the 17-gene eut operon transcribed from a single promoter, induced by ethanolamine and adenosylcobalamin (AdoCbl, vitamin B12).</text>
</comment>
<comment type="disruption phenotype">
    <text evidence="2 3 4 5">Can use ethanolamine (EA) as a nitrogen source when AdoCbl but not cyano-B12 or hydroxy-B12 is provided; cannot use EA as a carbon source (PubMed:15516577, PubMed:2656649). Required for aerobic growth on ethanolamine supplemented with cobalamin (vitamin B12) (PubMed:10464203). A non-polar deletion mutant does not grow on EA between pH 5.5 and pH 8.5 (PubMed:16585748).</text>
</comment>
<comment type="similarity">
    <text evidence="9">Belongs to the EutA family.</text>
</comment>
<reference key="1">
    <citation type="journal article" date="1999" name="J. Bacteriol.">
        <title>The 17-gene ethanolamine (eut) operon of Salmonella typhimurium encodes five homologues of carboxysome shell proteins.</title>
        <authorList>
            <person name="Kofoid E.C."/>
            <person name="Rappleye C.A."/>
            <person name="Stojiljkovic I."/>
            <person name="Roth J.R."/>
        </authorList>
    </citation>
    <scope>NUCLEOTIDE SEQUENCE [GENOMIC DNA]</scope>
    <scope>FUNCTION</scope>
    <scope>DISRUPTION PHENOTYPE</scope>
    <source>
        <strain>LT2</strain>
    </source>
</reference>
<reference key="2">
    <citation type="journal article" date="2001" name="Nature">
        <title>Complete genome sequence of Salmonella enterica serovar Typhimurium LT2.</title>
        <authorList>
            <person name="McClelland M."/>
            <person name="Sanderson K.E."/>
            <person name="Spieth J."/>
            <person name="Clifton S.W."/>
            <person name="Latreille P."/>
            <person name="Courtney L."/>
            <person name="Porwollik S."/>
            <person name="Ali J."/>
            <person name="Dante M."/>
            <person name="Du F."/>
            <person name="Hou S."/>
            <person name="Layman D."/>
            <person name="Leonard S."/>
            <person name="Nguyen C."/>
            <person name="Scott K."/>
            <person name="Holmes A."/>
            <person name="Grewal N."/>
            <person name="Mulvaney E."/>
            <person name="Ryan E."/>
            <person name="Sun H."/>
            <person name="Florea L."/>
            <person name="Miller W."/>
            <person name="Stoneking T."/>
            <person name="Nhan M."/>
            <person name="Waterston R."/>
            <person name="Wilson R.K."/>
        </authorList>
    </citation>
    <scope>NUCLEOTIDE SEQUENCE [LARGE SCALE GENOMIC DNA]</scope>
    <source>
        <strain>LT2 / SGSC1412 / ATCC 700720</strain>
    </source>
</reference>
<reference key="3">
    <citation type="journal article" date="1988" name="J. Bacteriol.">
        <title>Ethanolamine utilization in Salmonella typhimurium.</title>
        <authorList>
            <person name="Roof D.M."/>
            <person name="Roth J.R."/>
        </authorList>
    </citation>
    <scope>FUNCTION</scope>
    <scope>PATHWAY</scope>
    <scope>OPERON</scope>
    <scope>INDUCTION BY ETHANOLAMINE AND COBALAMIN</scope>
    <source>
        <strain>LT2</strain>
    </source>
</reference>
<reference key="4">
    <citation type="journal article" date="1989" name="J. Bacteriol.">
        <title>Functions required for vitamin B12-dependent ethanolamine utilization in Salmonella typhimurium.</title>
        <authorList>
            <person name="Roof D.M."/>
            <person name="Roth J.R."/>
        </authorList>
    </citation>
    <scope>FUNCTION</scope>
    <scope>DISRUPTION PHENOTYPE</scope>
    <source>
        <strain>LT2</strain>
    </source>
</reference>
<reference key="5">
    <citation type="journal article" date="2004" name="J. Bacteriol.">
        <title>Evidence that a B12-adenosyl transferase is encoded within the ethanolamine operon of Salmonella enterica.</title>
        <authorList>
            <person name="Sheppard D.E."/>
            <person name="Penrod J.T."/>
            <person name="Bobik T."/>
            <person name="Kofoid E."/>
            <person name="Roth J.R."/>
        </authorList>
    </citation>
    <scope>FUNCTION</scope>
    <scope>DISRUPTION PHENOTYPE</scope>
    <source>
        <strain>LT2</strain>
    </source>
</reference>
<reference key="6">
    <citation type="journal article" date="2006" name="J. Bacteriol.">
        <title>Conserving a volatile metabolite: a role for carboxysome-like organelles in Salmonella enterica.</title>
        <authorList>
            <person name="Penrod J.T."/>
            <person name="Roth J.R."/>
        </authorList>
    </citation>
    <scope>DISRUPTION PHENOTYPE</scope>
    <source>
        <strain>LT2</strain>
    </source>
</reference>
<reference key="7">
    <citation type="journal article" date="2018" name="Infect. Immun.">
        <title>The Ethanolamine Permease EutH Promotes Vacuole Adaptation of Salmonella enterica and Listeria monocytogenes during Macrophage Infection.</title>
        <authorList>
            <person name="Anderson C.J."/>
            <person name="Satkovich J."/>
            <person name="Koeseoglu V.K."/>
            <person name="Agaisse H."/>
            <person name="Kendall M.M."/>
        </authorList>
    </citation>
    <scope>FUNCTION</scope>
    <source>
        <strain>SL1344</strain>
    </source>
</reference>
<organism>
    <name type="scientific">Salmonella typhimurium (strain LT2 / SGSC1412 / ATCC 700720)</name>
    <dbReference type="NCBI Taxonomy" id="99287"/>
    <lineage>
        <taxon>Bacteria</taxon>
        <taxon>Pseudomonadati</taxon>
        <taxon>Pseudomonadota</taxon>
        <taxon>Gammaproteobacteria</taxon>
        <taxon>Enterobacterales</taxon>
        <taxon>Enterobacteriaceae</taxon>
        <taxon>Salmonella</taxon>
    </lineage>
</organism>
<name>EUTA_SALTY</name>
<sequence length="467" mass="49527">MNTRQLLSVGIDIGTTTTQVIFSRLELVNRAAVSQVPRYEFIKRDISWQSPVFFTPVDKQGGLKEVELKALILAQYQAAGIAPESVDSGAIIITGESAKTRNARPAVMALSQSLGDFVVASAGPHLESVIAGHGAGAQSLSEQRMCRVLNIDIGGGTSNYALFDAGKVSGTACLNVGGRLLETDAQGRVVYAHQPGQMIIDEVFGSGTDARALAAAQLGQVARRMADLIVEVITGALSPLAQSLMQTGLLPADITPEVITLSGGVGECYRNQPADPFCFSDIGPLLATALHEHPRLREMNVQFPAQTVRATVIGAGAHTLSLSGSTIWLEDVQLPLRNLPVAIPQDDADLVNAWRQALLQLDLDPQTDAYVLALPATLPVRYAALLTVINALTAFVARYPNPHPLLVVAEQDFGKALGMLLRPQLPQLPLAVIDEVVVRAGDYIDIGTPLFGGSVVPVTVKSLAFPS</sequence>
<keyword id="KW-1283">Bacterial microcompartment</keyword>
<keyword id="KW-0143">Chaperone</keyword>
<keyword id="KW-1185">Reference proteome</keyword>
<keyword id="KW-0843">Virulence</keyword>
<evidence type="ECO:0000250" key="1">
    <source>
        <dbReference type="UniProtKB" id="P76551"/>
    </source>
</evidence>
<evidence type="ECO:0000269" key="2">
    <source>
    </source>
</evidence>
<evidence type="ECO:0000269" key="3">
    <source>
    </source>
</evidence>
<evidence type="ECO:0000269" key="4">
    <source>
    </source>
</evidence>
<evidence type="ECO:0000269" key="5">
    <source>
    </source>
</evidence>
<evidence type="ECO:0000269" key="6">
    <source>
    </source>
</evidence>
<evidence type="ECO:0000269" key="7">
    <source>
    </source>
</evidence>
<evidence type="ECO:0000303" key="8">
    <source>
    </source>
</evidence>
<evidence type="ECO:0000305" key="9"/>
<evidence type="ECO:0000305" key="10">
    <source>
    </source>
</evidence>
<evidence type="ECO:0000305" key="11">
    <source>
    </source>
</evidence>
<protein>
    <recommendedName>
        <fullName>Ethanolamine ammonia-lyase reactivase EutA</fullName>
    </recommendedName>
</protein>
<gene>
    <name evidence="8" type="primary">eutA</name>
    <name type="ordered locus">STM2459</name>
</gene>
<proteinExistence type="evidence at transcript level"/>
<accession>Q9ZFV2</accession>